<organism>
    <name type="scientific">Rattus norvegicus</name>
    <name type="common">Rat</name>
    <dbReference type="NCBI Taxonomy" id="10116"/>
    <lineage>
        <taxon>Eukaryota</taxon>
        <taxon>Metazoa</taxon>
        <taxon>Chordata</taxon>
        <taxon>Craniata</taxon>
        <taxon>Vertebrata</taxon>
        <taxon>Euteleostomi</taxon>
        <taxon>Mammalia</taxon>
        <taxon>Eutheria</taxon>
        <taxon>Euarchontoglires</taxon>
        <taxon>Glires</taxon>
        <taxon>Rodentia</taxon>
        <taxon>Myomorpha</taxon>
        <taxon>Muroidea</taxon>
        <taxon>Muridae</taxon>
        <taxon>Murinae</taxon>
        <taxon>Rattus</taxon>
    </lineage>
</organism>
<gene>
    <name type="primary">Pdia5</name>
</gene>
<accession>Q5I0H9</accession>
<proteinExistence type="evidence at transcript level"/>
<feature type="signal peptide" evidence="3">
    <location>
        <begin position="1"/>
        <end position="21"/>
    </location>
</feature>
<feature type="chain" id="PRO_0000034235" description="Protein disulfide-isomerase A5">
    <location>
        <begin position="22"/>
        <end position="517"/>
    </location>
</feature>
<feature type="domain" description="Thioredoxin 1" evidence="4">
    <location>
        <begin position="132"/>
        <end position="259"/>
    </location>
</feature>
<feature type="domain" description="Thioredoxin 2" evidence="4">
    <location>
        <begin position="268"/>
        <end position="382"/>
    </location>
</feature>
<feature type="domain" description="Thioredoxin 3" evidence="4">
    <location>
        <begin position="376"/>
        <end position="504"/>
    </location>
</feature>
<feature type="short sequence motif" description="Prevents secretion from ER" evidence="3">
    <location>
        <begin position="514"/>
        <end position="517"/>
    </location>
</feature>
<feature type="disulfide bond" evidence="2">
    <location>
        <begin position="83"/>
        <end position="92"/>
    </location>
</feature>
<feature type="disulfide bond" description="Redox-active" evidence="4">
    <location>
        <begin position="180"/>
        <end position="183"/>
    </location>
</feature>
<feature type="disulfide bond" description="Redox-active" evidence="4">
    <location>
        <begin position="303"/>
        <end position="306"/>
    </location>
</feature>
<feature type="disulfide bond" description="Redox-active" evidence="4">
    <location>
        <begin position="424"/>
        <end position="427"/>
    </location>
</feature>
<dbReference type="EC" id="5.3.4.1"/>
<dbReference type="EMBL" id="BC088305">
    <property type="protein sequence ID" value="AAH88305.1"/>
    <property type="molecule type" value="mRNA"/>
</dbReference>
<dbReference type="RefSeq" id="NP_001014147.1">
    <property type="nucleotide sequence ID" value="NM_001014125.1"/>
</dbReference>
<dbReference type="SMR" id="Q5I0H9"/>
<dbReference type="FunCoup" id="Q5I0H9">
    <property type="interactions" value="1709"/>
</dbReference>
<dbReference type="STRING" id="10116.ENSRNOP00000059945"/>
<dbReference type="PhosphoSitePlus" id="Q5I0H9"/>
<dbReference type="PaxDb" id="10116-ENSRNOP00000059945"/>
<dbReference type="Ensembl" id="ENSRNOT00000067984.2">
    <property type="protein sequence ID" value="ENSRNOP00000059945.3"/>
    <property type="gene ID" value="ENSRNOG00000032327.5"/>
</dbReference>
<dbReference type="GeneID" id="360722"/>
<dbReference type="KEGG" id="rno:360722"/>
<dbReference type="UCSC" id="RGD:1359236">
    <property type="organism name" value="rat"/>
</dbReference>
<dbReference type="AGR" id="RGD:1359236"/>
<dbReference type="CTD" id="10954"/>
<dbReference type="RGD" id="1359236">
    <property type="gene designation" value="Pdia5"/>
</dbReference>
<dbReference type="eggNOG" id="KOG0191">
    <property type="taxonomic scope" value="Eukaryota"/>
</dbReference>
<dbReference type="GeneTree" id="ENSGT00940000156797"/>
<dbReference type="HOGENOM" id="CLU_021181_1_0_1"/>
<dbReference type="InParanoid" id="Q5I0H9"/>
<dbReference type="OMA" id="FCKKMKP"/>
<dbReference type="OrthoDB" id="74910at2759"/>
<dbReference type="PhylomeDB" id="Q5I0H9"/>
<dbReference type="TreeFam" id="TF106379"/>
<dbReference type="PRO" id="PR:Q5I0H9"/>
<dbReference type="Proteomes" id="UP000002494">
    <property type="component" value="Chromosome 11"/>
</dbReference>
<dbReference type="Bgee" id="ENSRNOG00000032327">
    <property type="expression patterns" value="Expressed in liver and 18 other cell types or tissues"/>
</dbReference>
<dbReference type="GO" id="GO:0005783">
    <property type="term" value="C:endoplasmic reticulum"/>
    <property type="evidence" value="ECO:0000318"/>
    <property type="project" value="GO_Central"/>
</dbReference>
<dbReference type="GO" id="GO:0005788">
    <property type="term" value="C:endoplasmic reticulum lumen"/>
    <property type="evidence" value="ECO:0007669"/>
    <property type="project" value="UniProtKB-SubCell"/>
</dbReference>
<dbReference type="GO" id="GO:0003756">
    <property type="term" value="F:protein disulfide isomerase activity"/>
    <property type="evidence" value="ECO:0000266"/>
    <property type="project" value="RGD"/>
</dbReference>
<dbReference type="GO" id="GO:0015035">
    <property type="term" value="F:protein-disulfide reductase activity"/>
    <property type="evidence" value="ECO:0000266"/>
    <property type="project" value="RGD"/>
</dbReference>
<dbReference type="GO" id="GO:0006457">
    <property type="term" value="P:protein folding"/>
    <property type="evidence" value="ECO:0000266"/>
    <property type="project" value="RGD"/>
</dbReference>
<dbReference type="CDD" id="cd02997">
    <property type="entry name" value="PDI_a_PDIR"/>
    <property type="match status" value="3"/>
</dbReference>
<dbReference type="CDD" id="cd03067">
    <property type="entry name" value="PDI_b_PDIR_N"/>
    <property type="match status" value="1"/>
</dbReference>
<dbReference type="FunFam" id="3.40.30.10:FF:000029">
    <property type="entry name" value="protein disulfide-isomerase A5 isoform X2"/>
    <property type="match status" value="3"/>
</dbReference>
<dbReference type="FunFam" id="3.40.30.10:FF:000105">
    <property type="entry name" value="protein disulfide-isomerase A5 isoform X2"/>
    <property type="match status" value="1"/>
</dbReference>
<dbReference type="Gene3D" id="3.40.30.10">
    <property type="entry name" value="Glutaredoxin"/>
    <property type="match status" value="4"/>
</dbReference>
<dbReference type="InterPro" id="IPR051063">
    <property type="entry name" value="PDI"/>
</dbReference>
<dbReference type="InterPro" id="IPR046374">
    <property type="entry name" value="PDI_a_PDIR"/>
</dbReference>
<dbReference type="InterPro" id="IPR041865">
    <property type="entry name" value="PDI_b_PDIR_N"/>
</dbReference>
<dbReference type="InterPro" id="IPR036249">
    <property type="entry name" value="Thioredoxin-like_sf"/>
</dbReference>
<dbReference type="InterPro" id="IPR017937">
    <property type="entry name" value="Thioredoxin_CS"/>
</dbReference>
<dbReference type="InterPro" id="IPR013766">
    <property type="entry name" value="Thioredoxin_domain"/>
</dbReference>
<dbReference type="PANTHER" id="PTHR45672:SF2">
    <property type="entry name" value="PROTEIN DISULFIDE-ISOMERASE A5"/>
    <property type="match status" value="1"/>
</dbReference>
<dbReference type="PANTHER" id="PTHR45672">
    <property type="entry name" value="PROTEIN DISULFIDE-ISOMERASE C17H9.14C-RELATED"/>
    <property type="match status" value="1"/>
</dbReference>
<dbReference type="Pfam" id="PF00085">
    <property type="entry name" value="Thioredoxin"/>
    <property type="match status" value="3"/>
</dbReference>
<dbReference type="PRINTS" id="PR00421">
    <property type="entry name" value="THIOREDOXIN"/>
</dbReference>
<dbReference type="SUPFAM" id="SSF52833">
    <property type="entry name" value="Thioredoxin-like"/>
    <property type="match status" value="4"/>
</dbReference>
<dbReference type="PROSITE" id="PS00194">
    <property type="entry name" value="THIOREDOXIN_1"/>
    <property type="match status" value="2"/>
</dbReference>
<dbReference type="PROSITE" id="PS51352">
    <property type="entry name" value="THIOREDOXIN_2"/>
    <property type="match status" value="3"/>
</dbReference>
<keyword id="KW-1015">Disulfide bond</keyword>
<keyword id="KW-0256">Endoplasmic reticulum</keyword>
<keyword id="KW-0413">Isomerase</keyword>
<keyword id="KW-0676">Redox-active center</keyword>
<keyword id="KW-1185">Reference proteome</keyword>
<keyword id="KW-0677">Repeat</keyword>
<keyword id="KW-0732">Signal</keyword>
<sequence length="517" mass="59399">MARAWGLLLAIGVILPTWLSSTKVSSLIERISDPKDLKKLLRTRNNVLVLYSESEVAAESHLKLLSTVAQAVKGQGTICWVDCGDAESRKLCKKMKVDLSPKDKKIELFHYQDGAFHMQYDRAVTLKSIVAFLKDPKGPPLWEEDPGAKDVVHIDSEKDFRRLLKKEEKPLLMMFYAPWCSMCKRIMPHFQKAATQVRGHTVLAGMNVYPPEFENIKEEYNVRGYPTICYFEKGRFLFQYENYGSTAEDIVEWLKNPQPPQPQVPETPWADEGGSVYHLTDEDFDQFVKEHSSVLVMFHAPWCGHCKKMKPEFESAAEVLHGDAESSGVLAAVDATINEALAERFHISAFPTLKYFKNGEQQAVPALRTKKKFIEWMQNPEAPPPPEPTWEEQQTSVLHLVGDNFRETLKKKKHTLVMFYAPWCPHCKKVIPHFTATADAFKDDRKIACAAVDCVKDKNQDLCQQESVKAYPTFHYYHYGKLVEKYESDRTELGFTSFIRTLREGDLKRLEKRREDL</sequence>
<reference key="1">
    <citation type="journal article" date="2004" name="Genome Res.">
        <title>The status, quality, and expansion of the NIH full-length cDNA project: the Mammalian Gene Collection (MGC).</title>
        <authorList>
            <consortium name="The MGC Project Team"/>
        </authorList>
    </citation>
    <scope>NUCLEOTIDE SEQUENCE [LARGE SCALE MRNA]</scope>
    <source>
        <tissue>Liver</tissue>
    </source>
</reference>
<name>PDIA5_RAT</name>
<comment type="catalytic activity">
    <reaction>
        <text>Catalyzes the rearrangement of -S-S- bonds in proteins.</text>
        <dbReference type="EC" id="5.3.4.1"/>
    </reaction>
</comment>
<comment type="subcellular location">
    <subcellularLocation>
        <location evidence="1">Endoplasmic reticulum lumen</location>
    </subcellularLocation>
</comment>
<comment type="similarity">
    <text evidence="5">Belongs to the protein disulfide isomerase family.</text>
</comment>
<protein>
    <recommendedName>
        <fullName>Protein disulfide-isomerase A5</fullName>
        <ecNumber>5.3.4.1</ecNumber>
    </recommendedName>
</protein>
<evidence type="ECO:0000250" key="1"/>
<evidence type="ECO:0000250" key="2">
    <source>
        <dbReference type="UniProtKB" id="Q14554"/>
    </source>
</evidence>
<evidence type="ECO:0000255" key="3"/>
<evidence type="ECO:0000255" key="4">
    <source>
        <dbReference type="PROSITE-ProRule" id="PRU00691"/>
    </source>
</evidence>
<evidence type="ECO:0000305" key="5"/>